<feature type="chain" id="PRO_1000199022" description="Aspartate--tRNA(Asp/Asn) ligase">
    <location>
        <begin position="1"/>
        <end position="592"/>
    </location>
</feature>
<feature type="region of interest" description="Aspartate" evidence="1">
    <location>
        <begin position="196"/>
        <end position="199"/>
    </location>
</feature>
<feature type="binding site" evidence="1">
    <location>
        <position position="172"/>
    </location>
    <ligand>
        <name>L-aspartate</name>
        <dbReference type="ChEBI" id="CHEBI:29991"/>
    </ligand>
</feature>
<feature type="binding site" evidence="1">
    <location>
        <begin position="218"/>
        <end position="220"/>
    </location>
    <ligand>
        <name>ATP</name>
        <dbReference type="ChEBI" id="CHEBI:30616"/>
    </ligand>
</feature>
<feature type="binding site" evidence="1">
    <location>
        <position position="218"/>
    </location>
    <ligand>
        <name>L-aspartate</name>
        <dbReference type="ChEBI" id="CHEBI:29991"/>
    </ligand>
</feature>
<feature type="binding site" evidence="1">
    <location>
        <position position="227"/>
    </location>
    <ligand>
        <name>ATP</name>
        <dbReference type="ChEBI" id="CHEBI:30616"/>
    </ligand>
</feature>
<feature type="binding site" evidence="1">
    <location>
        <position position="450"/>
    </location>
    <ligand>
        <name>L-aspartate</name>
        <dbReference type="ChEBI" id="CHEBI:29991"/>
    </ligand>
</feature>
<feature type="binding site" evidence="1">
    <location>
        <position position="484"/>
    </location>
    <ligand>
        <name>ATP</name>
        <dbReference type="ChEBI" id="CHEBI:30616"/>
    </ligand>
</feature>
<feature type="binding site" evidence="1">
    <location>
        <position position="491"/>
    </location>
    <ligand>
        <name>L-aspartate</name>
        <dbReference type="ChEBI" id="CHEBI:29991"/>
    </ligand>
</feature>
<feature type="binding site" evidence="1">
    <location>
        <begin position="536"/>
        <end position="539"/>
    </location>
    <ligand>
        <name>ATP</name>
        <dbReference type="ChEBI" id="CHEBI:30616"/>
    </ligand>
</feature>
<feature type="site" description="Important for tRNA non-discrimination" evidence="1">
    <location>
        <position position="30"/>
    </location>
</feature>
<feature type="site" description="Important for tRNA non-discrimination" evidence="1">
    <location>
        <position position="81"/>
    </location>
</feature>
<accession>B8GUK0</accession>
<gene>
    <name evidence="1" type="primary">aspS</name>
    <name type="ordered locus">Tgr7_2240</name>
</gene>
<name>SYDND_THISH</name>
<sequence length="592" mass="66680">MRSHYCGSVNESHLDQEVTLCGWVNRRRDHGGVIFIDLRDREGLVQVVFDPDLPEVFATAERVRSEYVLKVKGRVRRRPAGTENPDLPTGAIEVLGRELTVLNSAETPPFQLDEDEVNEETRLRYRYVDLRRPAMQKRLQMRARVSRTLRRFLEDNGFLDIETPMLTKATPEGARDYIVPSRTHPGSFFALPQSPQLFKQLLMMGGMDRYYQIVRCFRDEDLRADRQPEFTQLDIETSFMDEEGIMGLMEEMVRELFAQVLEVPLHTPFQRMSYAEAMARYGSDKPDLRIPLELTELTDIMGEVDFKVFSGPARDPAGRVAALRVPKGGELSRKDIDDYTHFVGRYGAKGLAYIKVNDLNAGREGLQSPILKFMPDTVVVEILGRTGAEDGDLIFFGADKARIVNEALGALRVKLGHDLGLVERGWRPLWVVDFPMFEHDEKEGRWVALHHPFTAPRVERPEELTGNPGEMISRAYDMVLNGTEVGGGSVRIHTTAMQQAVFNLLGIGEAEARDKFGFLLDALKYGCPPHGGIAFGLDRLVMLMTGSQSIRDVMAFPKTQTAHCPLTDAPAEVSDAQLKELSIRVKKQTASG</sequence>
<organism>
    <name type="scientific">Thioalkalivibrio sulfidiphilus (strain HL-EbGR7)</name>
    <dbReference type="NCBI Taxonomy" id="396588"/>
    <lineage>
        <taxon>Bacteria</taxon>
        <taxon>Pseudomonadati</taxon>
        <taxon>Pseudomonadota</taxon>
        <taxon>Gammaproteobacteria</taxon>
        <taxon>Chromatiales</taxon>
        <taxon>Ectothiorhodospiraceae</taxon>
        <taxon>Thioalkalivibrio</taxon>
    </lineage>
</organism>
<keyword id="KW-0030">Aminoacyl-tRNA synthetase</keyword>
<keyword id="KW-0067">ATP-binding</keyword>
<keyword id="KW-0963">Cytoplasm</keyword>
<keyword id="KW-0436">Ligase</keyword>
<keyword id="KW-0547">Nucleotide-binding</keyword>
<keyword id="KW-0648">Protein biosynthesis</keyword>
<keyword id="KW-1185">Reference proteome</keyword>
<comment type="function">
    <text evidence="1">Aspartyl-tRNA synthetase with relaxed tRNA specificity since it is able to aspartylate not only its cognate tRNA(Asp) but also tRNA(Asn). Reaction proceeds in two steps: L-aspartate is first activated by ATP to form Asp-AMP and then transferred to the acceptor end of tRNA(Asp/Asn).</text>
</comment>
<comment type="catalytic activity">
    <reaction evidence="1">
        <text>tRNA(Asx) + L-aspartate + ATP = L-aspartyl-tRNA(Asx) + AMP + diphosphate</text>
        <dbReference type="Rhea" id="RHEA:18349"/>
        <dbReference type="Rhea" id="RHEA-COMP:9710"/>
        <dbReference type="Rhea" id="RHEA-COMP:9711"/>
        <dbReference type="ChEBI" id="CHEBI:29991"/>
        <dbReference type="ChEBI" id="CHEBI:30616"/>
        <dbReference type="ChEBI" id="CHEBI:33019"/>
        <dbReference type="ChEBI" id="CHEBI:78442"/>
        <dbReference type="ChEBI" id="CHEBI:78516"/>
        <dbReference type="ChEBI" id="CHEBI:456215"/>
        <dbReference type="EC" id="6.1.1.23"/>
    </reaction>
</comment>
<comment type="subunit">
    <text evidence="1">Homodimer.</text>
</comment>
<comment type="subcellular location">
    <subcellularLocation>
        <location evidence="1">Cytoplasm</location>
    </subcellularLocation>
</comment>
<comment type="similarity">
    <text evidence="1">Belongs to the class-II aminoacyl-tRNA synthetase family. Type 1 subfamily.</text>
</comment>
<proteinExistence type="inferred from homology"/>
<reference key="1">
    <citation type="journal article" date="2011" name="Stand. Genomic Sci.">
        <title>Complete genome sequence of 'Thioalkalivibrio sulfidophilus' HL-EbGr7.</title>
        <authorList>
            <person name="Muyzer G."/>
            <person name="Sorokin D.Y."/>
            <person name="Mavromatis K."/>
            <person name="Lapidus A."/>
            <person name="Clum A."/>
            <person name="Ivanova N."/>
            <person name="Pati A."/>
            <person name="d'Haeseleer P."/>
            <person name="Woyke T."/>
            <person name="Kyrpides N.C."/>
        </authorList>
    </citation>
    <scope>NUCLEOTIDE SEQUENCE [LARGE SCALE GENOMIC DNA]</scope>
    <source>
        <strain>HL-EbGR7</strain>
    </source>
</reference>
<protein>
    <recommendedName>
        <fullName evidence="1">Aspartate--tRNA(Asp/Asn) ligase</fullName>
        <ecNumber evidence="1">6.1.1.23</ecNumber>
    </recommendedName>
    <alternativeName>
        <fullName evidence="1">Aspartyl-tRNA synthetase</fullName>
        <shortName evidence="1">AspRS</shortName>
    </alternativeName>
    <alternativeName>
        <fullName evidence="1">Non-discriminating aspartyl-tRNA synthetase</fullName>
        <shortName evidence="1">ND-AspRS</shortName>
    </alternativeName>
</protein>
<dbReference type="EC" id="6.1.1.23" evidence="1"/>
<dbReference type="EMBL" id="CP001339">
    <property type="protein sequence ID" value="ACL73320.1"/>
    <property type="molecule type" value="Genomic_DNA"/>
</dbReference>
<dbReference type="RefSeq" id="WP_012638796.1">
    <property type="nucleotide sequence ID" value="NC_011901.1"/>
</dbReference>
<dbReference type="SMR" id="B8GUK0"/>
<dbReference type="STRING" id="396588.Tgr7_2240"/>
<dbReference type="KEGG" id="tgr:Tgr7_2240"/>
<dbReference type="eggNOG" id="COG0173">
    <property type="taxonomic scope" value="Bacteria"/>
</dbReference>
<dbReference type="HOGENOM" id="CLU_014330_3_2_6"/>
<dbReference type="OrthoDB" id="9802326at2"/>
<dbReference type="Proteomes" id="UP000002383">
    <property type="component" value="Chromosome"/>
</dbReference>
<dbReference type="GO" id="GO:0005737">
    <property type="term" value="C:cytoplasm"/>
    <property type="evidence" value="ECO:0007669"/>
    <property type="project" value="UniProtKB-SubCell"/>
</dbReference>
<dbReference type="GO" id="GO:0004815">
    <property type="term" value="F:aspartate-tRNA ligase activity"/>
    <property type="evidence" value="ECO:0007669"/>
    <property type="project" value="UniProtKB-UniRule"/>
</dbReference>
<dbReference type="GO" id="GO:0050560">
    <property type="term" value="F:aspartate-tRNA(Asn) ligase activity"/>
    <property type="evidence" value="ECO:0007669"/>
    <property type="project" value="UniProtKB-EC"/>
</dbReference>
<dbReference type="GO" id="GO:0005524">
    <property type="term" value="F:ATP binding"/>
    <property type="evidence" value="ECO:0007669"/>
    <property type="project" value="UniProtKB-UniRule"/>
</dbReference>
<dbReference type="GO" id="GO:0003676">
    <property type="term" value="F:nucleic acid binding"/>
    <property type="evidence" value="ECO:0007669"/>
    <property type="project" value="InterPro"/>
</dbReference>
<dbReference type="GO" id="GO:0006422">
    <property type="term" value="P:aspartyl-tRNA aminoacylation"/>
    <property type="evidence" value="ECO:0007669"/>
    <property type="project" value="UniProtKB-UniRule"/>
</dbReference>
<dbReference type="CDD" id="cd00777">
    <property type="entry name" value="AspRS_core"/>
    <property type="match status" value="1"/>
</dbReference>
<dbReference type="CDD" id="cd04317">
    <property type="entry name" value="EcAspRS_like_N"/>
    <property type="match status" value="1"/>
</dbReference>
<dbReference type="Gene3D" id="3.30.930.10">
    <property type="entry name" value="Bira Bifunctional Protein, Domain 2"/>
    <property type="match status" value="1"/>
</dbReference>
<dbReference type="Gene3D" id="3.30.1360.30">
    <property type="entry name" value="GAD-like domain"/>
    <property type="match status" value="1"/>
</dbReference>
<dbReference type="Gene3D" id="2.40.50.140">
    <property type="entry name" value="Nucleic acid-binding proteins"/>
    <property type="match status" value="1"/>
</dbReference>
<dbReference type="HAMAP" id="MF_00044">
    <property type="entry name" value="Asp_tRNA_synth_type1"/>
    <property type="match status" value="1"/>
</dbReference>
<dbReference type="InterPro" id="IPR004364">
    <property type="entry name" value="Aa-tRNA-synt_II"/>
</dbReference>
<dbReference type="InterPro" id="IPR006195">
    <property type="entry name" value="aa-tRNA-synth_II"/>
</dbReference>
<dbReference type="InterPro" id="IPR045864">
    <property type="entry name" value="aa-tRNA-synth_II/BPL/LPL"/>
</dbReference>
<dbReference type="InterPro" id="IPR004524">
    <property type="entry name" value="Asp-tRNA-ligase_1"/>
</dbReference>
<dbReference type="InterPro" id="IPR047089">
    <property type="entry name" value="Asp-tRNA-ligase_1_N"/>
</dbReference>
<dbReference type="InterPro" id="IPR002312">
    <property type="entry name" value="Asp/Asn-tRNA-synth_IIb"/>
</dbReference>
<dbReference type="InterPro" id="IPR047090">
    <property type="entry name" value="AspRS_core"/>
</dbReference>
<dbReference type="InterPro" id="IPR004115">
    <property type="entry name" value="GAD-like_sf"/>
</dbReference>
<dbReference type="InterPro" id="IPR029351">
    <property type="entry name" value="GAD_dom"/>
</dbReference>
<dbReference type="InterPro" id="IPR012340">
    <property type="entry name" value="NA-bd_OB-fold"/>
</dbReference>
<dbReference type="InterPro" id="IPR004365">
    <property type="entry name" value="NA-bd_OB_tRNA"/>
</dbReference>
<dbReference type="NCBIfam" id="TIGR00459">
    <property type="entry name" value="aspS_bact"/>
    <property type="match status" value="1"/>
</dbReference>
<dbReference type="NCBIfam" id="NF001750">
    <property type="entry name" value="PRK00476.1"/>
    <property type="match status" value="1"/>
</dbReference>
<dbReference type="PANTHER" id="PTHR22594:SF5">
    <property type="entry name" value="ASPARTATE--TRNA LIGASE, MITOCHONDRIAL"/>
    <property type="match status" value="1"/>
</dbReference>
<dbReference type="PANTHER" id="PTHR22594">
    <property type="entry name" value="ASPARTYL/LYSYL-TRNA SYNTHETASE"/>
    <property type="match status" value="1"/>
</dbReference>
<dbReference type="Pfam" id="PF02938">
    <property type="entry name" value="GAD"/>
    <property type="match status" value="1"/>
</dbReference>
<dbReference type="Pfam" id="PF00152">
    <property type="entry name" value="tRNA-synt_2"/>
    <property type="match status" value="1"/>
</dbReference>
<dbReference type="Pfam" id="PF01336">
    <property type="entry name" value="tRNA_anti-codon"/>
    <property type="match status" value="1"/>
</dbReference>
<dbReference type="PRINTS" id="PR01042">
    <property type="entry name" value="TRNASYNTHASP"/>
</dbReference>
<dbReference type="SUPFAM" id="SSF55681">
    <property type="entry name" value="Class II aaRS and biotin synthetases"/>
    <property type="match status" value="1"/>
</dbReference>
<dbReference type="SUPFAM" id="SSF55261">
    <property type="entry name" value="GAD domain-like"/>
    <property type="match status" value="1"/>
</dbReference>
<dbReference type="SUPFAM" id="SSF50249">
    <property type="entry name" value="Nucleic acid-binding proteins"/>
    <property type="match status" value="1"/>
</dbReference>
<dbReference type="PROSITE" id="PS50862">
    <property type="entry name" value="AA_TRNA_LIGASE_II"/>
    <property type="match status" value="1"/>
</dbReference>
<evidence type="ECO:0000255" key="1">
    <source>
        <dbReference type="HAMAP-Rule" id="MF_00044"/>
    </source>
</evidence>